<keyword id="KW-0002">3D-structure</keyword>
<keyword id="KW-0030">Aminoacyl-tRNA synthetase</keyword>
<keyword id="KW-0067">ATP-binding</keyword>
<keyword id="KW-0963">Cytoplasm</keyword>
<keyword id="KW-0436">Ligase</keyword>
<keyword id="KW-0547">Nucleotide-binding</keyword>
<keyword id="KW-0648">Protein biosynthesis</keyword>
<keyword id="KW-1185">Reference proteome</keyword>
<sequence length="462" mass="52991">MLDINAFLVEKGGDPEIIKASQKKRGDSVELVDEIIAEYKEWVKLRFDLDEHNKKLNSVQKEIGKRFKAKEDAKDLIAEKEKLSNEKKEIIEKEAEADKNLRSKINQVGNIVHESVVDSQDEENNELVRTWTPENYKKPEQIAAATGAPAKLSHHEVLLRLDGYDPERGVRIVGHRGYFLRNYGVFLNQALINYGLSFLSSKGYVPLQAPVMMNKEVMAKTAQLSQFDEELYKVIDGEDEKYLIATSEQPISAYHAGEWFESPAEQLPVRYAGYSSCFRREAGSHGKDAWGIFRVHAFEKIEQFVLTEPEKSWEEFDRMIGCSEEFYQSLGLPYRVVGIVSGELNNAAAKKYDLEAWFPFQQEYKELVSCSNCTDYQSRNLEIRCGIKQQNQQEKKYVHCLNSTLSATERTICCILENYQKEDGLVIPEVLRKYIPGEPEFIPYIKELPKNTTSVKKAKGKN</sequence>
<reference key="1">
    <citation type="journal article" date="2001" name="Yeast">
        <title>Seryl-tRNA synthetase is not responsible for the evolution of CUG codon reassignment in Candida albicans.</title>
        <authorList>
            <person name="O'Sullivan J.M."/>
            <person name="Mihr M.J."/>
            <person name="Santos M.A.S."/>
            <person name="Tuite M.F."/>
        </authorList>
    </citation>
    <scope>NUCLEOTIDE SEQUENCE [GENOMIC DNA]</scope>
    <scope>FUNCTION</scope>
    <source>
        <strain>ATCC 32032 / CBS 5736 / DSM 3454 / NBRC 1856</strain>
    </source>
</reference>
<reference key="2">
    <citation type="journal article" date="2004" name="Proc. Natl. Acad. Sci. U.S.A.">
        <title>The diploid genome sequence of Candida albicans.</title>
        <authorList>
            <person name="Jones T."/>
            <person name="Federspiel N.A."/>
            <person name="Chibana H."/>
            <person name="Dungan J."/>
            <person name="Kalman S."/>
            <person name="Magee B.B."/>
            <person name="Newport G."/>
            <person name="Thorstenson Y.R."/>
            <person name="Agabian N."/>
            <person name="Magee P.T."/>
            <person name="Davis R.W."/>
            <person name="Scherer S."/>
        </authorList>
    </citation>
    <scope>NUCLEOTIDE SEQUENCE [LARGE SCALE GENOMIC DNA]</scope>
    <source>
        <strain>SC5314 / ATCC MYA-2876</strain>
    </source>
</reference>
<reference key="3">
    <citation type="journal article" date="2007" name="Genome Biol.">
        <title>Assembly of the Candida albicans genome into sixteen supercontigs aligned on the eight chromosomes.</title>
        <authorList>
            <person name="van het Hoog M."/>
            <person name="Rast T.J."/>
            <person name="Martchenko M."/>
            <person name="Grindle S."/>
            <person name="Dignard D."/>
            <person name="Hogues H."/>
            <person name="Cuomo C."/>
            <person name="Berriman M."/>
            <person name="Scherer S."/>
            <person name="Magee B.B."/>
            <person name="Whiteway M."/>
            <person name="Chibana H."/>
            <person name="Nantel A."/>
            <person name="Magee P.T."/>
        </authorList>
    </citation>
    <scope>GENOME REANNOTATION</scope>
    <source>
        <strain>SC5314 / ATCC MYA-2876</strain>
    </source>
</reference>
<reference key="4">
    <citation type="journal article" date="2013" name="Genome Biol.">
        <title>Assembly of a phased diploid Candida albicans genome facilitates allele-specific measurements and provides a simple model for repeat and indel structure.</title>
        <authorList>
            <person name="Muzzey D."/>
            <person name="Schwartz K."/>
            <person name="Weissman J.S."/>
            <person name="Sherlock G."/>
        </authorList>
    </citation>
    <scope>NUCLEOTIDE SEQUENCE [LARGE SCALE GENOMIC DNA]</scope>
    <scope>GENOME REANNOTATION</scope>
    <source>
        <strain>SC5314 / ATCC MYA-2876</strain>
    </source>
</reference>
<proteinExistence type="evidence at protein level"/>
<feature type="chain" id="PRO_0000122197" description="Serine--tRNA ligase, cytoplasmic">
    <location>
        <begin position="1"/>
        <end position="462"/>
    </location>
</feature>
<feature type="binding site" evidence="1">
    <location>
        <begin position="246"/>
        <end position="248"/>
    </location>
    <ligand>
        <name>L-serine</name>
        <dbReference type="ChEBI" id="CHEBI:33384"/>
    </ligand>
</feature>
<feature type="binding site" evidence="1">
    <location>
        <begin position="279"/>
        <end position="281"/>
    </location>
    <ligand>
        <name>ATP</name>
        <dbReference type="ChEBI" id="CHEBI:30616"/>
    </ligand>
</feature>
<feature type="binding site" evidence="1">
    <location>
        <position position="295"/>
    </location>
    <ligand>
        <name>ATP</name>
        <dbReference type="ChEBI" id="CHEBI:30616"/>
    </ligand>
</feature>
<feature type="binding site" evidence="1">
    <location>
        <position position="302"/>
    </location>
    <ligand>
        <name>L-serine</name>
        <dbReference type="ChEBI" id="CHEBI:33384"/>
    </ligand>
</feature>
<feature type="binding site" evidence="1">
    <location>
        <begin position="366"/>
        <end position="369"/>
    </location>
    <ligand>
        <name>ATP</name>
        <dbReference type="ChEBI" id="CHEBI:30616"/>
    </ligand>
</feature>
<feature type="binding site" evidence="1">
    <location>
        <position position="404"/>
    </location>
    <ligand>
        <name>L-serine</name>
        <dbReference type="ChEBI" id="CHEBI:33384"/>
    </ligand>
</feature>
<feature type="helix" evidence="6">
    <location>
        <begin position="4"/>
        <end position="7"/>
    </location>
</feature>
<feature type="helix" evidence="6">
    <location>
        <begin position="9"/>
        <end position="11"/>
    </location>
</feature>
<feature type="helix" evidence="6">
    <location>
        <begin position="15"/>
        <end position="25"/>
    </location>
</feature>
<feature type="helix" evidence="6">
    <location>
        <begin position="30"/>
        <end position="68"/>
    </location>
</feature>
<feature type="helix" evidence="6">
    <location>
        <begin position="74"/>
        <end position="105"/>
    </location>
</feature>
<feature type="helix" evidence="6">
    <location>
        <begin position="122"/>
        <end position="124"/>
    </location>
</feature>
<feature type="strand" evidence="6">
    <location>
        <begin position="126"/>
        <end position="131"/>
    </location>
</feature>
<feature type="strand" evidence="6">
    <location>
        <begin position="138"/>
        <end position="142"/>
    </location>
</feature>
<feature type="turn" evidence="6">
    <location>
        <begin position="144"/>
        <end position="146"/>
    </location>
</feature>
<feature type="helix" evidence="6">
    <location>
        <begin position="154"/>
        <end position="160"/>
    </location>
</feature>
<feature type="helix" evidence="6">
    <location>
        <begin position="166"/>
        <end position="173"/>
    </location>
</feature>
<feature type="helix" evidence="6">
    <location>
        <begin position="183"/>
        <end position="200"/>
    </location>
</feature>
<feature type="turn" evidence="6">
    <location>
        <begin position="201"/>
        <end position="203"/>
    </location>
</feature>
<feature type="strand" evidence="6">
    <location>
        <begin position="205"/>
        <end position="208"/>
    </location>
</feature>
<feature type="strand" evidence="6">
    <location>
        <begin position="211"/>
        <end position="214"/>
    </location>
</feature>
<feature type="helix" evidence="6">
    <location>
        <begin position="215"/>
        <end position="221"/>
    </location>
</feature>
<feature type="helix" evidence="6">
    <location>
        <begin position="224"/>
        <end position="227"/>
    </location>
</feature>
<feature type="turn" evidence="6">
    <location>
        <begin position="228"/>
        <end position="230"/>
    </location>
</feature>
<feature type="strand" evidence="6">
    <location>
        <begin position="233"/>
        <end position="236"/>
    </location>
</feature>
<feature type="strand" evidence="6">
    <location>
        <begin position="239"/>
        <end position="243"/>
    </location>
</feature>
<feature type="helix" evidence="6">
    <location>
        <begin position="248"/>
        <end position="254"/>
    </location>
</feature>
<feature type="turn" evidence="6">
    <location>
        <begin position="255"/>
        <end position="257"/>
    </location>
</feature>
<feature type="strand" evidence="6">
    <location>
        <begin position="259"/>
        <end position="262"/>
    </location>
</feature>
<feature type="helix" evidence="6">
    <location>
        <begin position="263"/>
        <end position="266"/>
    </location>
</feature>
<feature type="strand" evidence="6">
    <location>
        <begin position="269"/>
        <end position="278"/>
    </location>
</feature>
<feature type="strand" evidence="6">
    <location>
        <begin position="291"/>
        <end position="294"/>
    </location>
</feature>
<feature type="strand" evidence="6">
    <location>
        <begin position="296"/>
        <end position="307"/>
    </location>
</feature>
<feature type="helix" evidence="6">
    <location>
        <begin position="309"/>
        <end position="311"/>
    </location>
</feature>
<feature type="helix" evidence="6">
    <location>
        <begin position="312"/>
        <end position="329"/>
    </location>
</feature>
<feature type="strand" evidence="6">
    <location>
        <begin position="334"/>
        <end position="338"/>
    </location>
</feature>
<feature type="helix" evidence="6">
    <location>
        <begin position="341"/>
        <end position="343"/>
    </location>
</feature>
<feature type="strand" evidence="6">
    <location>
        <begin position="349"/>
        <end position="358"/>
    </location>
</feature>
<feature type="turn" evidence="6">
    <location>
        <begin position="359"/>
        <end position="362"/>
    </location>
</feature>
<feature type="strand" evidence="6">
    <location>
        <begin position="363"/>
        <end position="372"/>
    </location>
</feature>
<feature type="helix" evidence="6">
    <location>
        <begin position="376"/>
        <end position="380"/>
    </location>
</feature>
<feature type="strand" evidence="6">
    <location>
        <begin position="399"/>
        <end position="407"/>
    </location>
</feature>
<feature type="helix" evidence="6">
    <location>
        <begin position="408"/>
        <end position="418"/>
    </location>
</feature>
<feature type="strand" evidence="6">
    <location>
        <begin position="419"/>
        <end position="421"/>
    </location>
</feature>
<feature type="strand" evidence="6">
    <location>
        <begin position="424"/>
        <end position="426"/>
    </location>
</feature>
<feature type="helix" evidence="6">
    <location>
        <begin position="429"/>
        <end position="434"/>
    </location>
</feature>
<feature type="strand" evidence="6">
    <location>
        <begin position="440"/>
        <end position="443"/>
    </location>
</feature>
<name>SYSC_CANAL</name>
<accession>Q9HGT6</accession>
<accession>A0A1D8PJH7</accession>
<accession>Q5AEY4</accession>
<protein>
    <recommendedName>
        <fullName>Serine--tRNA ligase, cytoplasmic</fullName>
        <ecNumber evidence="2">6.1.1.11</ecNumber>
    </recommendedName>
    <alternativeName>
        <fullName>Seryl-tRNA synthetase</fullName>
        <shortName>SerRS</shortName>
    </alternativeName>
    <alternativeName>
        <fullName evidence="5">Seryl-tRNA(Ser) synthetase</fullName>
    </alternativeName>
</protein>
<comment type="function">
    <text evidence="4">Catalyzes the attachment of serine to tRNA(Ser) in a two-step reaction: serine is first activated by ATP to form Ser-AMP and then transferred to the acceptor end of tRNA(Ser).</text>
</comment>
<comment type="catalytic activity">
    <reaction evidence="2">
        <text>tRNA(Ser) + L-serine + ATP = L-seryl-tRNA(Ser) + AMP + diphosphate + H(+)</text>
        <dbReference type="Rhea" id="RHEA:12292"/>
        <dbReference type="Rhea" id="RHEA-COMP:9669"/>
        <dbReference type="Rhea" id="RHEA-COMP:9703"/>
        <dbReference type="ChEBI" id="CHEBI:15378"/>
        <dbReference type="ChEBI" id="CHEBI:30616"/>
        <dbReference type="ChEBI" id="CHEBI:33019"/>
        <dbReference type="ChEBI" id="CHEBI:33384"/>
        <dbReference type="ChEBI" id="CHEBI:78442"/>
        <dbReference type="ChEBI" id="CHEBI:78533"/>
        <dbReference type="ChEBI" id="CHEBI:456215"/>
        <dbReference type="EC" id="6.1.1.11"/>
    </reaction>
</comment>
<comment type="subunit">
    <text evidence="2">Homodimer. The tRNA molecule binds across the dimer (By similarity).</text>
</comment>
<comment type="subcellular location">
    <subcellularLocation>
        <location evidence="3">Cytoplasm</location>
        <location evidence="3">Cytosol</location>
    </subcellularLocation>
</comment>
<comment type="domain">
    <text evidence="3">Consists of two distinct domains, a catalytic core and a N-terminal extension that is involved in tRNA binding.</text>
</comment>
<comment type="similarity">
    <text evidence="5">Belongs to the class-II aminoacyl-tRNA synthetase family. Type-1 seryl-tRNA synthetase subfamily.</text>
</comment>
<comment type="caution">
    <text evidence="5">Although this enzyme participates in the selenocysteinyl-tRNA(Sec) biosynthesis pathway in many taxa, this pathway has been shown in PubMed:30742068 to be lost in dikarya.</text>
</comment>
<comment type="sequence caution" evidence="5">
    <conflict type="frameshift">
        <sequence resource="EMBL-CDS" id="AOW28309"/>
    </conflict>
</comment>
<organism>
    <name type="scientific">Candida albicans (strain SC5314 / ATCC MYA-2876)</name>
    <name type="common">Yeast</name>
    <dbReference type="NCBI Taxonomy" id="237561"/>
    <lineage>
        <taxon>Eukaryota</taxon>
        <taxon>Fungi</taxon>
        <taxon>Dikarya</taxon>
        <taxon>Ascomycota</taxon>
        <taxon>Saccharomycotina</taxon>
        <taxon>Pichiomycetes</taxon>
        <taxon>Debaryomycetaceae</taxon>
        <taxon>Candida/Lodderomyces clade</taxon>
        <taxon>Candida</taxon>
    </lineage>
</organism>
<dbReference type="EC" id="6.1.1.11" evidence="2"/>
<dbReference type="EMBL" id="AF290915">
    <property type="protein sequence ID" value="AAG02209.1"/>
    <property type="molecule type" value="Genomic_DNA"/>
</dbReference>
<dbReference type="EMBL" id="CP017625">
    <property type="protein sequence ID" value="AOW28309.1"/>
    <property type="status" value="ALT_FRAME"/>
    <property type="molecule type" value="Genomic_DNA"/>
</dbReference>
<dbReference type="RefSeq" id="XP_719967.2">
    <property type="nucleotide sequence ID" value="XM_714874.2"/>
</dbReference>
<dbReference type="PDB" id="3QNE">
    <property type="method" value="X-ray"/>
    <property type="resolution" value="2.00 A"/>
    <property type="chains" value="A=1-462"/>
</dbReference>
<dbReference type="PDB" id="3QO5">
    <property type="method" value="X-ray"/>
    <property type="resolution" value="2.30 A"/>
    <property type="chains" value="A=1-462"/>
</dbReference>
<dbReference type="PDB" id="3QO7">
    <property type="method" value="X-ray"/>
    <property type="resolution" value="2.55 A"/>
    <property type="chains" value="A=1-462"/>
</dbReference>
<dbReference type="PDB" id="3QO8">
    <property type="method" value="X-ray"/>
    <property type="resolution" value="2.00 A"/>
    <property type="chains" value="A=1-462"/>
</dbReference>
<dbReference type="PDBsum" id="3QNE"/>
<dbReference type="PDBsum" id="3QO5"/>
<dbReference type="PDBsum" id="3QO7"/>
<dbReference type="PDBsum" id="3QO8"/>
<dbReference type="SMR" id="Q9HGT6"/>
<dbReference type="BioGRID" id="1221320">
    <property type="interactions" value="1"/>
</dbReference>
<dbReference type="DIP" id="DIP-59702N"/>
<dbReference type="FunCoup" id="Q9HGT6">
    <property type="interactions" value="855"/>
</dbReference>
<dbReference type="STRING" id="237561.Q9HGT6"/>
<dbReference type="PeptideAtlas" id="Q9HGT6"/>
<dbReference type="GeneID" id="3638415"/>
<dbReference type="KEGG" id="cal:CAALFM_C302780WA"/>
<dbReference type="eggNOG" id="KOG2509">
    <property type="taxonomic scope" value="Eukaryota"/>
</dbReference>
<dbReference type="HOGENOM" id="CLU_023797_0_1_1"/>
<dbReference type="InParanoid" id="Q9HGT6"/>
<dbReference type="OrthoDB" id="10264585at2759"/>
<dbReference type="BRENDA" id="6.1.1.11">
    <property type="organism ID" value="1096"/>
</dbReference>
<dbReference type="EvolutionaryTrace" id="Q9HGT6"/>
<dbReference type="Proteomes" id="UP000000559">
    <property type="component" value="Chromosome 3"/>
</dbReference>
<dbReference type="GO" id="GO:0005737">
    <property type="term" value="C:cytoplasm"/>
    <property type="evidence" value="ECO:0000250"/>
    <property type="project" value="UniProtKB"/>
</dbReference>
<dbReference type="GO" id="GO:0005829">
    <property type="term" value="C:cytosol"/>
    <property type="evidence" value="ECO:0000250"/>
    <property type="project" value="UniProtKB"/>
</dbReference>
<dbReference type="GO" id="GO:0005524">
    <property type="term" value="F:ATP binding"/>
    <property type="evidence" value="ECO:0007669"/>
    <property type="project" value="UniProtKB-KW"/>
</dbReference>
<dbReference type="GO" id="GO:0004828">
    <property type="term" value="F:serine-tRNA ligase activity"/>
    <property type="evidence" value="ECO:0000250"/>
    <property type="project" value="UniProtKB"/>
</dbReference>
<dbReference type="GO" id="GO:0000049">
    <property type="term" value="F:tRNA binding"/>
    <property type="evidence" value="ECO:0000318"/>
    <property type="project" value="GO_Central"/>
</dbReference>
<dbReference type="GO" id="GO:0002181">
    <property type="term" value="P:cytoplasmic translation"/>
    <property type="evidence" value="ECO:0000250"/>
    <property type="project" value="UniProtKB"/>
</dbReference>
<dbReference type="GO" id="GO:0006434">
    <property type="term" value="P:seryl-tRNA aminoacylation"/>
    <property type="evidence" value="ECO:0000250"/>
    <property type="project" value="UniProtKB"/>
</dbReference>
<dbReference type="CDD" id="cd00770">
    <property type="entry name" value="SerRS_core"/>
    <property type="match status" value="1"/>
</dbReference>
<dbReference type="FunFam" id="1.10.287.40:FF:000003">
    <property type="entry name" value="Serine--tRNA ligase cytoplasmic"/>
    <property type="match status" value="1"/>
</dbReference>
<dbReference type="FunFam" id="3.30.930.10:FF:000026">
    <property type="entry name" value="Seryl-tRNA synthetase, cytoplasmic"/>
    <property type="match status" value="1"/>
</dbReference>
<dbReference type="Gene3D" id="3.30.930.10">
    <property type="entry name" value="Bira Bifunctional Protein, Domain 2"/>
    <property type="match status" value="1"/>
</dbReference>
<dbReference type="Gene3D" id="1.10.287.40">
    <property type="entry name" value="Serine-tRNA synthetase, tRNA binding domain"/>
    <property type="match status" value="1"/>
</dbReference>
<dbReference type="InterPro" id="IPR002314">
    <property type="entry name" value="aa-tRNA-synt_IIb"/>
</dbReference>
<dbReference type="InterPro" id="IPR006195">
    <property type="entry name" value="aa-tRNA-synth_II"/>
</dbReference>
<dbReference type="InterPro" id="IPR045864">
    <property type="entry name" value="aa-tRNA-synth_II/BPL/LPL"/>
</dbReference>
<dbReference type="InterPro" id="IPR002317">
    <property type="entry name" value="Ser-tRNA-ligase_type_1"/>
</dbReference>
<dbReference type="InterPro" id="IPR015866">
    <property type="entry name" value="Ser-tRNA-synth_1_N"/>
</dbReference>
<dbReference type="InterPro" id="IPR042103">
    <property type="entry name" value="SerRS_1_N_sf"/>
</dbReference>
<dbReference type="InterPro" id="IPR033729">
    <property type="entry name" value="SerRS_core"/>
</dbReference>
<dbReference type="InterPro" id="IPR010978">
    <property type="entry name" value="tRNA-bd_arm"/>
</dbReference>
<dbReference type="NCBIfam" id="TIGR00414">
    <property type="entry name" value="serS"/>
    <property type="match status" value="1"/>
</dbReference>
<dbReference type="PANTHER" id="PTHR11778">
    <property type="entry name" value="SERYL-TRNA SYNTHETASE"/>
    <property type="match status" value="1"/>
</dbReference>
<dbReference type="Pfam" id="PF02403">
    <property type="entry name" value="Seryl_tRNA_N"/>
    <property type="match status" value="1"/>
</dbReference>
<dbReference type="Pfam" id="PF00587">
    <property type="entry name" value="tRNA-synt_2b"/>
    <property type="match status" value="1"/>
</dbReference>
<dbReference type="PIRSF" id="PIRSF001529">
    <property type="entry name" value="Ser-tRNA-synth_IIa"/>
    <property type="match status" value="1"/>
</dbReference>
<dbReference type="PRINTS" id="PR00981">
    <property type="entry name" value="TRNASYNTHSER"/>
</dbReference>
<dbReference type="SUPFAM" id="SSF55681">
    <property type="entry name" value="Class II aaRS and biotin synthetases"/>
    <property type="match status" value="1"/>
</dbReference>
<dbReference type="SUPFAM" id="SSF46589">
    <property type="entry name" value="tRNA-binding arm"/>
    <property type="match status" value="1"/>
</dbReference>
<dbReference type="PROSITE" id="PS50862">
    <property type="entry name" value="AA_TRNA_LIGASE_II"/>
    <property type="match status" value="1"/>
</dbReference>
<evidence type="ECO:0000250" key="1"/>
<evidence type="ECO:0000250" key="2">
    <source>
        <dbReference type="UniProtKB" id="P07284"/>
    </source>
</evidence>
<evidence type="ECO:0000250" key="3">
    <source>
        <dbReference type="UniProtKB" id="P49591"/>
    </source>
</evidence>
<evidence type="ECO:0000269" key="4">
    <source>
    </source>
</evidence>
<evidence type="ECO:0000305" key="5"/>
<evidence type="ECO:0007829" key="6">
    <source>
        <dbReference type="PDB" id="3QNE"/>
    </source>
</evidence>
<gene>
    <name type="primary">SES1</name>
    <name type="ordered locus">CAALFM_C302780WA</name>
    <name type="ORF">CaO19.7901</name>
</gene>